<proteinExistence type="inferred from homology"/>
<evidence type="ECO:0000250" key="1">
    <source>
        <dbReference type="UniProtKB" id="Q6BF16"/>
    </source>
</evidence>
<evidence type="ECO:0000269" key="2">
    <source>
    </source>
</evidence>
<evidence type="ECO:0000305" key="3"/>
<name>DGOA_RHIME</name>
<feature type="chain" id="PRO_0000428930" description="Probable 2-dehydro-3-deoxy-6-phosphogalactonate aldolase">
    <location>
        <begin position="1"/>
        <end position="212"/>
    </location>
</feature>
<feature type="active site" description="Proton donor/acceptor" evidence="1">
    <location>
        <position position="41"/>
    </location>
</feature>
<feature type="active site" description="Schiff-base intermediate with substrate" evidence="1">
    <location>
        <position position="130"/>
    </location>
</feature>
<feature type="binding site" evidence="1">
    <location>
        <position position="18"/>
    </location>
    <ligand>
        <name>2-dehydro-3-deoxy-6-phospho-D-galactonate</name>
        <dbReference type="ChEBI" id="CHEBI:58298"/>
    </ligand>
</feature>
<feature type="binding site" evidence="1">
    <location>
        <position position="70"/>
    </location>
    <ligand>
        <name>2-dehydro-3-deoxy-6-phospho-D-galactonate</name>
        <dbReference type="ChEBI" id="CHEBI:58298"/>
    </ligand>
</feature>
<feature type="binding site" description="covalent" evidence="1">
    <location>
        <position position="130"/>
    </location>
    <ligand>
        <name>2-dehydro-3-deoxy-6-phospho-D-galactonate</name>
        <dbReference type="ChEBI" id="CHEBI:58298"/>
    </ligand>
</feature>
<feature type="binding site" evidence="1">
    <location>
        <position position="160"/>
    </location>
    <ligand>
        <name>2-dehydro-3-deoxy-6-phospho-D-galactonate</name>
        <dbReference type="ChEBI" id="CHEBI:58298"/>
    </ligand>
</feature>
<feature type="binding site" evidence="1">
    <location>
        <position position="180"/>
    </location>
    <ligand>
        <name>2-dehydro-3-deoxy-6-phospho-D-galactonate</name>
        <dbReference type="ChEBI" id="CHEBI:58298"/>
    </ligand>
</feature>
<feature type="binding site" evidence="1">
    <location>
        <position position="181"/>
    </location>
    <ligand>
        <name>2-dehydro-3-deoxy-6-phospho-D-galactonate</name>
        <dbReference type="ChEBI" id="CHEBI:58298"/>
    </ligand>
</feature>
<feature type="site" description="Orients the nucleophilic substrate" evidence="1">
    <location>
        <position position="18"/>
    </location>
</feature>
<feature type="site" description="Plays a major role in determining the stereoselectivity" evidence="1">
    <location>
        <position position="158"/>
    </location>
</feature>
<reference key="1">
    <citation type="journal article" date="2001" name="Proc. Natl. Acad. Sci. U.S.A.">
        <title>Analysis of the chromosome sequence of the legume symbiont Sinorhizobium meliloti strain 1021.</title>
        <authorList>
            <person name="Capela D."/>
            <person name="Barloy-Hubler F."/>
            <person name="Gouzy J."/>
            <person name="Bothe G."/>
            <person name="Ampe F."/>
            <person name="Batut J."/>
            <person name="Boistard P."/>
            <person name="Becker A."/>
            <person name="Boutry M."/>
            <person name="Cadieu E."/>
            <person name="Dreano S."/>
            <person name="Gloux S."/>
            <person name="Godrie T."/>
            <person name="Goffeau A."/>
            <person name="Kahn D."/>
            <person name="Kiss E."/>
            <person name="Lelaure V."/>
            <person name="Masuy D."/>
            <person name="Pohl T."/>
            <person name="Portetelle D."/>
            <person name="Puehler A."/>
            <person name="Purnelle B."/>
            <person name="Ramsperger U."/>
            <person name="Renard C."/>
            <person name="Thebault P."/>
            <person name="Vandenbol M."/>
            <person name="Weidner S."/>
            <person name="Galibert F."/>
        </authorList>
    </citation>
    <scope>NUCLEOTIDE SEQUENCE [LARGE SCALE GENOMIC DNA]</scope>
    <source>
        <strain>1021</strain>
    </source>
</reference>
<reference key="2">
    <citation type="journal article" date="2001" name="Science">
        <title>The composite genome of the legume symbiont Sinorhizobium meliloti.</title>
        <authorList>
            <person name="Galibert F."/>
            <person name="Finan T.M."/>
            <person name="Long S.R."/>
            <person name="Puehler A."/>
            <person name="Abola P."/>
            <person name="Ampe F."/>
            <person name="Barloy-Hubler F."/>
            <person name="Barnett M.J."/>
            <person name="Becker A."/>
            <person name="Boistard P."/>
            <person name="Bothe G."/>
            <person name="Boutry M."/>
            <person name="Bowser L."/>
            <person name="Buhrmester J."/>
            <person name="Cadieu E."/>
            <person name="Capela D."/>
            <person name="Chain P."/>
            <person name="Cowie A."/>
            <person name="Davis R.W."/>
            <person name="Dreano S."/>
            <person name="Federspiel N.A."/>
            <person name="Fisher R.F."/>
            <person name="Gloux S."/>
            <person name="Godrie T."/>
            <person name="Goffeau A."/>
            <person name="Golding B."/>
            <person name="Gouzy J."/>
            <person name="Gurjal M."/>
            <person name="Hernandez-Lucas I."/>
            <person name="Hong A."/>
            <person name="Huizar L."/>
            <person name="Hyman R.W."/>
            <person name="Jones T."/>
            <person name="Kahn D."/>
            <person name="Kahn M.L."/>
            <person name="Kalman S."/>
            <person name="Keating D.H."/>
            <person name="Kiss E."/>
            <person name="Komp C."/>
            <person name="Lelaure V."/>
            <person name="Masuy D."/>
            <person name="Palm C."/>
            <person name="Peck M.C."/>
            <person name="Pohl T.M."/>
            <person name="Portetelle D."/>
            <person name="Purnelle B."/>
            <person name="Ramsperger U."/>
            <person name="Surzycki R."/>
            <person name="Thebault P."/>
            <person name="Vandenbol M."/>
            <person name="Vorhoelter F.J."/>
            <person name="Weidner S."/>
            <person name="Wells D.H."/>
            <person name="Wong K."/>
            <person name="Yeh K.-C."/>
            <person name="Batut J."/>
        </authorList>
    </citation>
    <scope>NUCLEOTIDE SEQUENCE [LARGE SCALE GENOMIC DNA]</scope>
    <source>
        <strain>1021</strain>
    </source>
</reference>
<reference key="3">
    <citation type="journal article" date="2012" name="J. Bacteriol.">
        <title>Inability to catabolize galactose leads to increased ability to compete for nodule occupancy in Sinorhizobium meliloti.</title>
        <authorList>
            <person name="Geddes B.A."/>
            <person name="Oresnik I.J."/>
        </authorList>
    </citation>
    <scope>DISRUPTION PHENOTYPE</scope>
    <source>
        <strain>1021</strain>
    </source>
</reference>
<gene>
    <name type="primary">dgoA</name>
    <name type="ordered locus">R00824</name>
    <name type="ORF">SMc00882</name>
</gene>
<organism>
    <name type="scientific">Rhizobium meliloti (strain 1021)</name>
    <name type="common">Ensifer meliloti</name>
    <name type="synonym">Sinorhizobium meliloti</name>
    <dbReference type="NCBI Taxonomy" id="266834"/>
    <lineage>
        <taxon>Bacteria</taxon>
        <taxon>Pseudomonadati</taxon>
        <taxon>Pseudomonadota</taxon>
        <taxon>Alphaproteobacteria</taxon>
        <taxon>Hyphomicrobiales</taxon>
        <taxon>Rhizobiaceae</taxon>
        <taxon>Sinorhizobium/Ensifer group</taxon>
        <taxon>Sinorhizobium</taxon>
    </lineage>
</organism>
<protein>
    <recommendedName>
        <fullName evidence="1">Probable 2-dehydro-3-deoxy-6-phosphogalactonate aldolase</fullName>
        <ecNumber evidence="1">4.1.2.21</ecNumber>
    </recommendedName>
    <alternativeName>
        <fullName evidence="1">2-oxo-3-deoxygalactonate 6-phosphate aldolase</fullName>
    </alternativeName>
    <alternativeName>
        <fullName evidence="1">6-phospho-2-dehydro-3-deoxygalactonate aldolase</fullName>
    </alternativeName>
    <alternativeName>
        <fullName evidence="1">6-phospho-2-keto-3-deoxygalactonate aldolase</fullName>
        <shortName evidence="1">KDPGal aldolase</shortName>
    </alternativeName>
</protein>
<keyword id="KW-0119">Carbohydrate metabolism</keyword>
<keyword id="KW-0456">Lyase</keyword>
<keyword id="KW-1185">Reference proteome</keyword>
<accession>Q92RN8</accession>
<sequence length="212" mass="21588">MDRIPLPPMERPLIAILRGLKPEEAEGVVGALIETGFTAIEIPLNSPDPFRSIETAVKMAPAGCLIGAGTVLTTAQVERLADVGGRLMVSPNVEPAVIRLAATKGMVTMPGVFTPTEALAAAAAGASGLKFFPASVLGPSGITAIRAVLPGDLEIAAVGGVSEVNFADYAAIGIRSFGLGSSLYKPGMSAGDVRQRAIATLAAYDAVYGGQQ</sequence>
<comment type="function">
    <text evidence="1">Involved in the degradation of galactose via the DeLey-Doudoroff pathway. Catalyzes the reversible, stereospecific retro-aldol cleavage of 2-keto-3-deoxy-6-phosphogalactonate (KDPGal) to pyruvate and D-glyceraldehyde-3-phosphate.</text>
</comment>
<comment type="catalytic activity">
    <reaction evidence="1">
        <text>2-dehydro-3-deoxy-6-phospho-D-galactonate = D-glyceraldehyde 3-phosphate + pyruvate</text>
        <dbReference type="Rhea" id="RHEA:24464"/>
        <dbReference type="ChEBI" id="CHEBI:15361"/>
        <dbReference type="ChEBI" id="CHEBI:58298"/>
        <dbReference type="ChEBI" id="CHEBI:59776"/>
        <dbReference type="EC" id="4.1.2.21"/>
    </reaction>
</comment>
<comment type="pathway">
    <text>Carbohydrate acid metabolism; D-galactonate degradation; D-glyceraldehyde 3-phosphate and pyruvate from D-galactonate: step 3/3.</text>
</comment>
<comment type="subunit">
    <text evidence="1">Homotrimer.</text>
</comment>
<comment type="disruption phenotype">
    <text evidence="2">Cells lacking this gene fail to grow on galactose as sole carbon source.</text>
</comment>
<comment type="similarity">
    <text evidence="3">Belongs to the KHG/KDPG aldolase family.</text>
</comment>
<dbReference type="EC" id="4.1.2.21" evidence="1"/>
<dbReference type="EMBL" id="AL591688">
    <property type="protein sequence ID" value="CAC45396.1"/>
    <property type="molecule type" value="Genomic_DNA"/>
</dbReference>
<dbReference type="RefSeq" id="NP_384930.1">
    <property type="nucleotide sequence ID" value="NC_003047.1"/>
</dbReference>
<dbReference type="RefSeq" id="WP_010968849.1">
    <property type="nucleotide sequence ID" value="NC_003047.1"/>
</dbReference>
<dbReference type="SMR" id="Q92RN8"/>
<dbReference type="EnsemblBacteria" id="CAC45396">
    <property type="protein sequence ID" value="CAC45396"/>
    <property type="gene ID" value="SMc00882"/>
</dbReference>
<dbReference type="KEGG" id="sme:SMc00882"/>
<dbReference type="PATRIC" id="fig|266834.11.peg.2214"/>
<dbReference type="eggNOG" id="COG0800">
    <property type="taxonomic scope" value="Bacteria"/>
</dbReference>
<dbReference type="HOGENOM" id="CLU_077795_2_1_5"/>
<dbReference type="OrthoDB" id="7204076at2"/>
<dbReference type="UniPathway" id="UPA00081">
    <property type="reaction ID" value="UER00520"/>
</dbReference>
<dbReference type="Proteomes" id="UP000001976">
    <property type="component" value="Chromosome"/>
</dbReference>
<dbReference type="GO" id="GO:0008674">
    <property type="term" value="F:2-dehydro-3-deoxy-6-phosphogalactonate aldolase activity"/>
    <property type="evidence" value="ECO:0007669"/>
    <property type="project" value="UniProtKB-EC"/>
</dbReference>
<dbReference type="GO" id="GO:0034194">
    <property type="term" value="P:D-galactonate catabolic process"/>
    <property type="evidence" value="ECO:0007669"/>
    <property type="project" value="UniProtKB-UniPathway"/>
</dbReference>
<dbReference type="CDD" id="cd00452">
    <property type="entry name" value="KDPG_aldolase"/>
    <property type="match status" value="1"/>
</dbReference>
<dbReference type="Gene3D" id="3.20.20.70">
    <property type="entry name" value="Aldolase class I"/>
    <property type="match status" value="1"/>
</dbReference>
<dbReference type="InterPro" id="IPR000887">
    <property type="entry name" value="Aldlse_KDPG_KHG"/>
</dbReference>
<dbReference type="InterPro" id="IPR013785">
    <property type="entry name" value="Aldolase_TIM"/>
</dbReference>
<dbReference type="InterPro" id="IPR031338">
    <property type="entry name" value="KDPG/KHG_AS_2"/>
</dbReference>
<dbReference type="NCBIfam" id="NF006600">
    <property type="entry name" value="PRK09140.1"/>
    <property type="match status" value="1"/>
</dbReference>
<dbReference type="PANTHER" id="PTHR30246:SF1">
    <property type="entry name" value="2-DEHYDRO-3-DEOXY-6-PHOSPHOGALACTONATE ALDOLASE-RELATED"/>
    <property type="match status" value="1"/>
</dbReference>
<dbReference type="PANTHER" id="PTHR30246">
    <property type="entry name" value="2-KETO-3-DEOXY-6-PHOSPHOGLUCONATE ALDOLASE"/>
    <property type="match status" value="1"/>
</dbReference>
<dbReference type="Pfam" id="PF01081">
    <property type="entry name" value="Aldolase"/>
    <property type="match status" value="1"/>
</dbReference>
<dbReference type="SUPFAM" id="SSF51569">
    <property type="entry name" value="Aldolase"/>
    <property type="match status" value="1"/>
</dbReference>
<dbReference type="PROSITE" id="PS00160">
    <property type="entry name" value="ALDOLASE_KDPG_KHG_2"/>
    <property type="match status" value="1"/>
</dbReference>